<reference key="1">
    <citation type="journal article" date="2003" name="J. Bacteriol.">
        <title>Comparative analyses of the complete genome sequences of Pierce's disease and citrus variegated chlorosis strains of Xylella fastidiosa.</title>
        <authorList>
            <person name="Van Sluys M.A."/>
            <person name="de Oliveira M.C."/>
            <person name="Monteiro-Vitorello C.B."/>
            <person name="Miyaki C.Y."/>
            <person name="Furlan L.R."/>
            <person name="Camargo L.E.A."/>
            <person name="da Silva A.C.R."/>
            <person name="Moon D.H."/>
            <person name="Takita M.A."/>
            <person name="Lemos E.G.M."/>
            <person name="Machado M.A."/>
            <person name="Ferro M.I.T."/>
            <person name="da Silva F.R."/>
            <person name="Goldman M.H.S."/>
            <person name="Goldman G.H."/>
            <person name="Lemos M.V.F."/>
            <person name="El-Dorry H."/>
            <person name="Tsai S.M."/>
            <person name="Carrer H."/>
            <person name="Carraro D.M."/>
            <person name="de Oliveira R.C."/>
            <person name="Nunes L.R."/>
            <person name="Siqueira W.J."/>
            <person name="Coutinho L.L."/>
            <person name="Kimura E.T."/>
            <person name="Ferro E.S."/>
            <person name="Harakava R."/>
            <person name="Kuramae E.E."/>
            <person name="Marino C.L."/>
            <person name="Giglioti E."/>
            <person name="Abreu I.L."/>
            <person name="Alves L.M.C."/>
            <person name="do Amaral A.M."/>
            <person name="Baia G.S."/>
            <person name="Blanco S.R."/>
            <person name="Brito M.S."/>
            <person name="Cannavan F.S."/>
            <person name="Celestino A.V."/>
            <person name="da Cunha A.F."/>
            <person name="Fenille R.C."/>
            <person name="Ferro J.A."/>
            <person name="Formighieri E.F."/>
            <person name="Kishi L.T."/>
            <person name="Leoni S.G."/>
            <person name="Oliveira A.R."/>
            <person name="Rosa V.E. Jr."/>
            <person name="Sassaki F.T."/>
            <person name="Sena J.A.D."/>
            <person name="de Souza A.A."/>
            <person name="Truffi D."/>
            <person name="Tsukumo F."/>
            <person name="Yanai G.M."/>
            <person name="Zaros L.G."/>
            <person name="Civerolo E.L."/>
            <person name="Simpson A.J.G."/>
            <person name="Almeida N.F. Jr."/>
            <person name="Setubal J.C."/>
            <person name="Kitajima J.P."/>
        </authorList>
    </citation>
    <scope>NUCLEOTIDE SEQUENCE [LARGE SCALE GENOMIC DNA]</scope>
    <source>
        <strain>Temecula1 / ATCC 700964</strain>
    </source>
</reference>
<accession>Q87EB3</accession>
<dbReference type="EC" id="6.1.1.6" evidence="1"/>
<dbReference type="EMBL" id="AE009442">
    <property type="protein sequence ID" value="AAO28284.1"/>
    <property type="molecule type" value="Genomic_DNA"/>
</dbReference>
<dbReference type="RefSeq" id="WP_004090013.1">
    <property type="nucleotide sequence ID" value="NC_004556.1"/>
</dbReference>
<dbReference type="SMR" id="Q87EB3"/>
<dbReference type="GeneID" id="93904105"/>
<dbReference type="KEGG" id="xft:PD_0404"/>
<dbReference type="HOGENOM" id="CLU_008255_6_0_6"/>
<dbReference type="Proteomes" id="UP000002516">
    <property type="component" value="Chromosome"/>
</dbReference>
<dbReference type="GO" id="GO:0005829">
    <property type="term" value="C:cytosol"/>
    <property type="evidence" value="ECO:0007669"/>
    <property type="project" value="TreeGrafter"/>
</dbReference>
<dbReference type="GO" id="GO:0005524">
    <property type="term" value="F:ATP binding"/>
    <property type="evidence" value="ECO:0007669"/>
    <property type="project" value="UniProtKB-UniRule"/>
</dbReference>
<dbReference type="GO" id="GO:0004824">
    <property type="term" value="F:lysine-tRNA ligase activity"/>
    <property type="evidence" value="ECO:0007669"/>
    <property type="project" value="UniProtKB-UniRule"/>
</dbReference>
<dbReference type="GO" id="GO:0000287">
    <property type="term" value="F:magnesium ion binding"/>
    <property type="evidence" value="ECO:0007669"/>
    <property type="project" value="UniProtKB-UniRule"/>
</dbReference>
<dbReference type="GO" id="GO:0000049">
    <property type="term" value="F:tRNA binding"/>
    <property type="evidence" value="ECO:0007669"/>
    <property type="project" value="TreeGrafter"/>
</dbReference>
<dbReference type="GO" id="GO:0006430">
    <property type="term" value="P:lysyl-tRNA aminoacylation"/>
    <property type="evidence" value="ECO:0007669"/>
    <property type="project" value="UniProtKB-UniRule"/>
</dbReference>
<dbReference type="CDD" id="cd00775">
    <property type="entry name" value="LysRS_core"/>
    <property type="match status" value="1"/>
</dbReference>
<dbReference type="CDD" id="cd04322">
    <property type="entry name" value="LysRS_N"/>
    <property type="match status" value="1"/>
</dbReference>
<dbReference type="FunFam" id="2.40.50.140:FF:000024">
    <property type="entry name" value="Lysine--tRNA ligase"/>
    <property type="match status" value="1"/>
</dbReference>
<dbReference type="FunFam" id="3.30.930.10:FF:000001">
    <property type="entry name" value="Lysine--tRNA ligase"/>
    <property type="match status" value="1"/>
</dbReference>
<dbReference type="Gene3D" id="3.30.930.10">
    <property type="entry name" value="Bira Bifunctional Protein, Domain 2"/>
    <property type="match status" value="1"/>
</dbReference>
<dbReference type="Gene3D" id="2.40.50.140">
    <property type="entry name" value="Nucleic acid-binding proteins"/>
    <property type="match status" value="1"/>
</dbReference>
<dbReference type="HAMAP" id="MF_00252">
    <property type="entry name" value="Lys_tRNA_synth_class2"/>
    <property type="match status" value="1"/>
</dbReference>
<dbReference type="InterPro" id="IPR004364">
    <property type="entry name" value="Aa-tRNA-synt_II"/>
</dbReference>
<dbReference type="InterPro" id="IPR006195">
    <property type="entry name" value="aa-tRNA-synth_II"/>
</dbReference>
<dbReference type="InterPro" id="IPR045864">
    <property type="entry name" value="aa-tRNA-synth_II/BPL/LPL"/>
</dbReference>
<dbReference type="InterPro" id="IPR002313">
    <property type="entry name" value="Lys-tRNA-ligase_II"/>
</dbReference>
<dbReference type="InterPro" id="IPR044136">
    <property type="entry name" value="Lys-tRNA-ligase_II_N"/>
</dbReference>
<dbReference type="InterPro" id="IPR018149">
    <property type="entry name" value="Lys-tRNA-synth_II_C"/>
</dbReference>
<dbReference type="InterPro" id="IPR012340">
    <property type="entry name" value="NA-bd_OB-fold"/>
</dbReference>
<dbReference type="InterPro" id="IPR004365">
    <property type="entry name" value="NA-bd_OB_tRNA"/>
</dbReference>
<dbReference type="NCBIfam" id="TIGR00499">
    <property type="entry name" value="lysS_bact"/>
    <property type="match status" value="1"/>
</dbReference>
<dbReference type="NCBIfam" id="NF001756">
    <property type="entry name" value="PRK00484.1"/>
    <property type="match status" value="1"/>
</dbReference>
<dbReference type="PANTHER" id="PTHR42918:SF15">
    <property type="entry name" value="LYSINE--TRNA LIGASE, CHLOROPLASTIC_MITOCHONDRIAL"/>
    <property type="match status" value="1"/>
</dbReference>
<dbReference type="PANTHER" id="PTHR42918">
    <property type="entry name" value="LYSYL-TRNA SYNTHETASE"/>
    <property type="match status" value="1"/>
</dbReference>
<dbReference type="Pfam" id="PF00152">
    <property type="entry name" value="tRNA-synt_2"/>
    <property type="match status" value="1"/>
</dbReference>
<dbReference type="Pfam" id="PF01336">
    <property type="entry name" value="tRNA_anti-codon"/>
    <property type="match status" value="1"/>
</dbReference>
<dbReference type="PRINTS" id="PR00982">
    <property type="entry name" value="TRNASYNTHLYS"/>
</dbReference>
<dbReference type="SUPFAM" id="SSF55681">
    <property type="entry name" value="Class II aaRS and biotin synthetases"/>
    <property type="match status" value="1"/>
</dbReference>
<dbReference type="SUPFAM" id="SSF50249">
    <property type="entry name" value="Nucleic acid-binding proteins"/>
    <property type="match status" value="1"/>
</dbReference>
<dbReference type="PROSITE" id="PS50862">
    <property type="entry name" value="AA_TRNA_LIGASE_II"/>
    <property type="match status" value="1"/>
</dbReference>
<name>SYK_XYLFT</name>
<evidence type="ECO:0000255" key="1">
    <source>
        <dbReference type="HAMAP-Rule" id="MF_00252"/>
    </source>
</evidence>
<protein>
    <recommendedName>
        <fullName evidence="1">Lysine--tRNA ligase</fullName>
        <ecNumber evidence="1">6.1.1.6</ecNumber>
    </recommendedName>
    <alternativeName>
        <fullName evidence="1">Lysyl-tRNA synthetase</fullName>
        <shortName evidence="1">LysRS</shortName>
    </alternativeName>
</protein>
<keyword id="KW-0030">Aminoacyl-tRNA synthetase</keyword>
<keyword id="KW-0067">ATP-binding</keyword>
<keyword id="KW-0963">Cytoplasm</keyword>
<keyword id="KW-0436">Ligase</keyword>
<keyword id="KW-0460">Magnesium</keyword>
<keyword id="KW-0479">Metal-binding</keyword>
<keyword id="KW-0547">Nucleotide-binding</keyword>
<keyword id="KW-0648">Protein biosynthesis</keyword>
<keyword id="KW-1185">Reference proteome</keyword>
<organism>
    <name type="scientific">Xylella fastidiosa (strain Temecula1 / ATCC 700964)</name>
    <dbReference type="NCBI Taxonomy" id="183190"/>
    <lineage>
        <taxon>Bacteria</taxon>
        <taxon>Pseudomonadati</taxon>
        <taxon>Pseudomonadota</taxon>
        <taxon>Gammaproteobacteria</taxon>
        <taxon>Lysobacterales</taxon>
        <taxon>Lysobacteraceae</taxon>
        <taxon>Xylella</taxon>
    </lineage>
</organism>
<proteinExistence type="inferred from homology"/>
<comment type="catalytic activity">
    <reaction evidence="1">
        <text>tRNA(Lys) + L-lysine + ATP = L-lysyl-tRNA(Lys) + AMP + diphosphate</text>
        <dbReference type="Rhea" id="RHEA:20792"/>
        <dbReference type="Rhea" id="RHEA-COMP:9696"/>
        <dbReference type="Rhea" id="RHEA-COMP:9697"/>
        <dbReference type="ChEBI" id="CHEBI:30616"/>
        <dbReference type="ChEBI" id="CHEBI:32551"/>
        <dbReference type="ChEBI" id="CHEBI:33019"/>
        <dbReference type="ChEBI" id="CHEBI:78442"/>
        <dbReference type="ChEBI" id="CHEBI:78529"/>
        <dbReference type="ChEBI" id="CHEBI:456215"/>
        <dbReference type="EC" id="6.1.1.6"/>
    </reaction>
</comment>
<comment type="cofactor">
    <cofactor evidence="1">
        <name>Mg(2+)</name>
        <dbReference type="ChEBI" id="CHEBI:18420"/>
    </cofactor>
    <text evidence="1">Binds 3 Mg(2+) ions per subunit.</text>
</comment>
<comment type="subunit">
    <text evidence="1">Homodimer.</text>
</comment>
<comment type="subcellular location">
    <subcellularLocation>
        <location evidence="1">Cytoplasm</location>
    </subcellularLocation>
</comment>
<comment type="similarity">
    <text evidence="1">Belongs to the class-II aminoacyl-tRNA synthetase family.</text>
</comment>
<feature type="chain" id="PRO_0000152709" description="Lysine--tRNA ligase">
    <location>
        <begin position="1"/>
        <end position="506"/>
    </location>
</feature>
<feature type="binding site" evidence="1">
    <location>
        <position position="416"/>
    </location>
    <ligand>
        <name>Mg(2+)</name>
        <dbReference type="ChEBI" id="CHEBI:18420"/>
        <label>1</label>
    </ligand>
</feature>
<feature type="binding site" evidence="1">
    <location>
        <position position="423"/>
    </location>
    <ligand>
        <name>Mg(2+)</name>
        <dbReference type="ChEBI" id="CHEBI:18420"/>
        <label>1</label>
    </ligand>
</feature>
<feature type="binding site" evidence="1">
    <location>
        <position position="423"/>
    </location>
    <ligand>
        <name>Mg(2+)</name>
        <dbReference type="ChEBI" id="CHEBI:18420"/>
        <label>2</label>
    </ligand>
</feature>
<gene>
    <name evidence="1" type="primary">lysS</name>
    <name type="ordered locus">PD_0404</name>
</gene>
<sequence length="506" mass="57564">MTEHLPASQVSFDENALIAERRAKLLALRAQGVAYPNDVKREHYAADVQAAFANVETWTAETLEASSHRVRMAGRLMAKRLMGKASFAQIQDESGRIQLLIQSNVLGEDSYAAFKVLDVGDIIAVEGGLTRTRTGELSVKVNVLRLLTKALRPLPDKWHGLTDVEQRYRQRYVDLIVTPESREIFIKRSKIIRALRTWLDARLFLEVETPMMHYIPGGAAAKPFVTYHNALDLELYLRVAPELYLKRLVVGGLERVYEINRNFRNEGVSTRHNPEFTMLELYEAYSTYHEVMDLAETMIRDTAQSVLGTTQVIWDGAQIDLGPIFRRWRMDEAVCHHNPEMSVAECTDRDALLLHCERLKIKVKSSYGWGRLLLSIFEATVEHTLIQPTFITDHPVEISPLARESDIESGYTDRFELFINGKEIANGFSELNDPEEQAMRFQKQVEAKEGGDDEAMYYDADYIRALEYGMAPTGGLGIGVDRLVMLLTGSTSIRDVLLFPYMRPER</sequence>